<protein>
    <recommendedName>
        <fullName evidence="1">Large ribosomal subunit protein uL24</fullName>
    </recommendedName>
    <alternativeName>
        <fullName evidence="2">50S ribosomal protein L24</fullName>
    </alternativeName>
</protein>
<accession>B3EUL2</accession>
<evidence type="ECO:0000255" key="1">
    <source>
        <dbReference type="HAMAP-Rule" id="MF_01326"/>
    </source>
</evidence>
<evidence type="ECO:0000305" key="2"/>
<sequence>MYNKHHKTLKLHIKKGDTVQVLSGNYRKKQGTVLKVFPKTYRAIVEGVHIVSKHKKPTAKNPQGTIEKVEAPIHISNLMLIESATSRPTRIGRKLDEEGKLQRYSKKTGEFIKNG</sequence>
<dbReference type="EMBL" id="CP001102">
    <property type="protein sequence ID" value="ACE05631.1"/>
    <property type="molecule type" value="Genomic_DNA"/>
</dbReference>
<dbReference type="RefSeq" id="WP_012472396.1">
    <property type="nucleotide sequence ID" value="NC_010830.1"/>
</dbReference>
<dbReference type="SMR" id="B3EUL2"/>
<dbReference type="STRING" id="452471.Aasi_0186"/>
<dbReference type="KEGG" id="aas:Aasi_0186"/>
<dbReference type="eggNOG" id="COG0198">
    <property type="taxonomic scope" value="Bacteria"/>
</dbReference>
<dbReference type="HOGENOM" id="CLU_093315_2_3_10"/>
<dbReference type="OrthoDB" id="9807419at2"/>
<dbReference type="Proteomes" id="UP000001227">
    <property type="component" value="Chromosome"/>
</dbReference>
<dbReference type="GO" id="GO:1990904">
    <property type="term" value="C:ribonucleoprotein complex"/>
    <property type="evidence" value="ECO:0007669"/>
    <property type="project" value="UniProtKB-KW"/>
</dbReference>
<dbReference type="GO" id="GO:0005840">
    <property type="term" value="C:ribosome"/>
    <property type="evidence" value="ECO:0007669"/>
    <property type="project" value="UniProtKB-KW"/>
</dbReference>
<dbReference type="GO" id="GO:0019843">
    <property type="term" value="F:rRNA binding"/>
    <property type="evidence" value="ECO:0007669"/>
    <property type="project" value="UniProtKB-UniRule"/>
</dbReference>
<dbReference type="GO" id="GO:0003735">
    <property type="term" value="F:structural constituent of ribosome"/>
    <property type="evidence" value="ECO:0007669"/>
    <property type="project" value="InterPro"/>
</dbReference>
<dbReference type="GO" id="GO:0006412">
    <property type="term" value="P:translation"/>
    <property type="evidence" value="ECO:0007669"/>
    <property type="project" value="UniProtKB-UniRule"/>
</dbReference>
<dbReference type="CDD" id="cd06089">
    <property type="entry name" value="KOW_RPL26"/>
    <property type="match status" value="1"/>
</dbReference>
<dbReference type="Gene3D" id="2.30.30.30">
    <property type="match status" value="1"/>
</dbReference>
<dbReference type="HAMAP" id="MF_01326_B">
    <property type="entry name" value="Ribosomal_uL24_B"/>
    <property type="match status" value="1"/>
</dbReference>
<dbReference type="InterPro" id="IPR005824">
    <property type="entry name" value="KOW"/>
</dbReference>
<dbReference type="InterPro" id="IPR014722">
    <property type="entry name" value="Rib_uL2_dom2"/>
</dbReference>
<dbReference type="InterPro" id="IPR003256">
    <property type="entry name" value="Ribosomal_uL24"/>
</dbReference>
<dbReference type="InterPro" id="IPR005825">
    <property type="entry name" value="Ribosomal_uL24_CS"/>
</dbReference>
<dbReference type="InterPro" id="IPR041988">
    <property type="entry name" value="Ribosomal_uL24_KOW"/>
</dbReference>
<dbReference type="InterPro" id="IPR008991">
    <property type="entry name" value="Translation_prot_SH3-like_sf"/>
</dbReference>
<dbReference type="NCBIfam" id="TIGR01079">
    <property type="entry name" value="rplX_bact"/>
    <property type="match status" value="1"/>
</dbReference>
<dbReference type="PANTHER" id="PTHR12903">
    <property type="entry name" value="MITOCHONDRIAL RIBOSOMAL PROTEIN L24"/>
    <property type="match status" value="1"/>
</dbReference>
<dbReference type="Pfam" id="PF00467">
    <property type="entry name" value="KOW"/>
    <property type="match status" value="1"/>
</dbReference>
<dbReference type="Pfam" id="PF17136">
    <property type="entry name" value="ribosomal_L24"/>
    <property type="match status" value="1"/>
</dbReference>
<dbReference type="SMART" id="SM00739">
    <property type="entry name" value="KOW"/>
    <property type="match status" value="1"/>
</dbReference>
<dbReference type="SUPFAM" id="SSF50104">
    <property type="entry name" value="Translation proteins SH3-like domain"/>
    <property type="match status" value="1"/>
</dbReference>
<dbReference type="PROSITE" id="PS01108">
    <property type="entry name" value="RIBOSOMAL_L24"/>
    <property type="match status" value="1"/>
</dbReference>
<keyword id="KW-1185">Reference proteome</keyword>
<keyword id="KW-0687">Ribonucleoprotein</keyword>
<keyword id="KW-0689">Ribosomal protein</keyword>
<keyword id="KW-0694">RNA-binding</keyword>
<keyword id="KW-0699">rRNA-binding</keyword>
<name>RL24_AMOA5</name>
<gene>
    <name evidence="1" type="primary">rplX</name>
    <name type="ordered locus">Aasi_0186</name>
</gene>
<feature type="chain" id="PRO_0000355645" description="Large ribosomal subunit protein uL24">
    <location>
        <begin position="1"/>
        <end position="115"/>
    </location>
</feature>
<organism>
    <name type="scientific">Amoebophilus asiaticus (strain 5a2)</name>
    <dbReference type="NCBI Taxonomy" id="452471"/>
    <lineage>
        <taxon>Bacteria</taxon>
        <taxon>Pseudomonadati</taxon>
        <taxon>Bacteroidota</taxon>
        <taxon>Cytophagia</taxon>
        <taxon>Cytophagales</taxon>
        <taxon>Amoebophilaceae</taxon>
        <taxon>Candidatus Amoebophilus</taxon>
    </lineage>
</organism>
<reference key="1">
    <citation type="journal article" date="2010" name="J. Bacteriol.">
        <title>The genome of the amoeba symbiont 'Candidatus Amoebophilus asiaticus' reveals common mechanisms for host cell interaction among amoeba-associated bacteria.</title>
        <authorList>
            <person name="Schmitz-Esser S."/>
            <person name="Tischler P."/>
            <person name="Arnold R."/>
            <person name="Montanaro J."/>
            <person name="Wagner M."/>
            <person name="Rattei T."/>
            <person name="Horn M."/>
        </authorList>
    </citation>
    <scope>NUCLEOTIDE SEQUENCE [LARGE SCALE GENOMIC DNA]</scope>
    <source>
        <strain>5a2</strain>
    </source>
</reference>
<comment type="function">
    <text evidence="1">One of two assembly initiator proteins, it binds directly to the 5'-end of the 23S rRNA, where it nucleates assembly of the 50S subunit.</text>
</comment>
<comment type="function">
    <text evidence="1">One of the proteins that surrounds the polypeptide exit tunnel on the outside of the subunit.</text>
</comment>
<comment type="subunit">
    <text evidence="1">Part of the 50S ribosomal subunit.</text>
</comment>
<comment type="similarity">
    <text evidence="1">Belongs to the universal ribosomal protein uL24 family.</text>
</comment>
<proteinExistence type="inferred from homology"/>